<proteinExistence type="inferred from homology"/>
<gene>
    <name evidence="2" type="primary">pip</name>
    <name type="synonym">pepI</name>
    <name type="ordered locus">lp_0088</name>
</gene>
<protein>
    <recommendedName>
        <fullName evidence="2">Proline iminopeptidase</fullName>
        <shortName evidence="2">PIP</shortName>
        <ecNumber>3.4.11.5</ecNumber>
    </recommendedName>
    <alternativeName>
        <fullName>Prolyl aminopeptidase</fullName>
        <shortName evidence="2">PAP</shortName>
    </alternativeName>
</protein>
<keyword id="KW-0031">Aminopeptidase</keyword>
<keyword id="KW-0378">Hydrolase</keyword>
<keyword id="KW-0645">Protease</keyword>
<keyword id="KW-1185">Reference proteome</keyword>
<dbReference type="EC" id="3.4.11.5"/>
<dbReference type="EMBL" id="AL935263">
    <property type="protein sequence ID" value="CCC77649.1"/>
    <property type="molecule type" value="Genomic_DNA"/>
</dbReference>
<dbReference type="RefSeq" id="YP_004888163.1">
    <property type="nucleotide sequence ID" value="NC_004567.2"/>
</dbReference>
<dbReference type="SMR" id="Q890D8"/>
<dbReference type="STRING" id="220668.lp_0088"/>
<dbReference type="ESTHER" id="lacpl-PEPI">
    <property type="family name" value="Proline_iminopeptidase"/>
</dbReference>
<dbReference type="MEROPS" id="S33.021"/>
<dbReference type="EnsemblBacteria" id="CCC77649">
    <property type="protein sequence ID" value="CCC77649"/>
    <property type="gene ID" value="lp_0088"/>
</dbReference>
<dbReference type="KEGG" id="lpl:lp_0088"/>
<dbReference type="PATRIC" id="fig|220668.9.peg.72"/>
<dbReference type="eggNOG" id="COG2267">
    <property type="taxonomic scope" value="Bacteria"/>
</dbReference>
<dbReference type="HOGENOM" id="CLU_020336_15_1_9"/>
<dbReference type="OrthoDB" id="9796770at2"/>
<dbReference type="PhylomeDB" id="Q890D8"/>
<dbReference type="BRENDA" id="3.4.11.5">
    <property type="organism ID" value="2849"/>
</dbReference>
<dbReference type="Proteomes" id="UP000000432">
    <property type="component" value="Chromosome"/>
</dbReference>
<dbReference type="GO" id="GO:0030313">
    <property type="term" value="C:cell envelope"/>
    <property type="evidence" value="ECO:0007669"/>
    <property type="project" value="UniProtKB-SubCell"/>
</dbReference>
<dbReference type="GO" id="GO:0016020">
    <property type="term" value="C:membrane"/>
    <property type="evidence" value="ECO:0007669"/>
    <property type="project" value="TreeGrafter"/>
</dbReference>
<dbReference type="GO" id="GO:0004177">
    <property type="term" value="F:aminopeptidase activity"/>
    <property type="evidence" value="ECO:0007669"/>
    <property type="project" value="UniProtKB-KW"/>
</dbReference>
<dbReference type="GO" id="GO:0006508">
    <property type="term" value="P:proteolysis"/>
    <property type="evidence" value="ECO:0007669"/>
    <property type="project" value="UniProtKB-KW"/>
</dbReference>
<dbReference type="Gene3D" id="3.40.50.1820">
    <property type="entry name" value="alpha/beta hydrolase"/>
    <property type="match status" value="1"/>
</dbReference>
<dbReference type="InterPro" id="IPR000073">
    <property type="entry name" value="AB_hydrolase_1"/>
</dbReference>
<dbReference type="InterPro" id="IPR029058">
    <property type="entry name" value="AB_hydrolase_fold"/>
</dbReference>
<dbReference type="InterPro" id="IPR050266">
    <property type="entry name" value="AB_hydrolase_sf"/>
</dbReference>
<dbReference type="InterPro" id="IPR002410">
    <property type="entry name" value="Peptidase_S33"/>
</dbReference>
<dbReference type="InterPro" id="IPR005945">
    <property type="entry name" value="Pro_imino_pep"/>
</dbReference>
<dbReference type="NCBIfam" id="TIGR01250">
    <property type="entry name" value="pro_imino_pep_2"/>
    <property type="match status" value="1"/>
</dbReference>
<dbReference type="NCBIfam" id="NF045945">
    <property type="entry name" value="ProImpepLactob"/>
    <property type="match status" value="1"/>
</dbReference>
<dbReference type="PANTHER" id="PTHR43798:SF33">
    <property type="entry name" value="HYDROLASE, PUTATIVE (AFU_ORTHOLOGUE AFUA_2G14860)-RELATED"/>
    <property type="match status" value="1"/>
</dbReference>
<dbReference type="PANTHER" id="PTHR43798">
    <property type="entry name" value="MONOACYLGLYCEROL LIPASE"/>
    <property type="match status" value="1"/>
</dbReference>
<dbReference type="Pfam" id="PF00561">
    <property type="entry name" value="Abhydrolase_1"/>
    <property type="match status" value="1"/>
</dbReference>
<dbReference type="PIRSF" id="PIRSF005539">
    <property type="entry name" value="Pept_S33_TRI_F1"/>
    <property type="match status" value="1"/>
</dbReference>
<dbReference type="PRINTS" id="PR00793">
    <property type="entry name" value="PROAMNOPTASE"/>
</dbReference>
<dbReference type="SUPFAM" id="SSF53474">
    <property type="entry name" value="alpha/beta-Hydrolases"/>
    <property type="match status" value="1"/>
</dbReference>
<accession>Q890D8</accession>
<accession>F9USR8</accession>
<organism>
    <name type="scientific">Lactiplantibacillus plantarum (strain ATCC BAA-793 / NCIMB 8826 / WCFS1)</name>
    <name type="common">Lactobacillus plantarum</name>
    <dbReference type="NCBI Taxonomy" id="220668"/>
    <lineage>
        <taxon>Bacteria</taxon>
        <taxon>Bacillati</taxon>
        <taxon>Bacillota</taxon>
        <taxon>Bacilli</taxon>
        <taxon>Lactobacillales</taxon>
        <taxon>Lactobacillaceae</taxon>
        <taxon>Lactiplantibacillus</taxon>
    </lineage>
</organism>
<comment type="function">
    <text evidence="2">Releases the N-terminal proline from various substrates.</text>
</comment>
<comment type="catalytic activity">
    <reaction evidence="2">
        <text>Release of N-terminal proline from a peptide.</text>
        <dbReference type="EC" id="3.4.11.5"/>
    </reaction>
</comment>
<comment type="subcellular location">
    <subcellularLocation>
        <location evidence="1">Cell envelope</location>
    </subcellularLocation>
</comment>
<comment type="similarity">
    <text evidence="3">Belongs to the peptidase S33 family.</text>
</comment>
<reference key="1">
    <citation type="journal article" date="2003" name="Proc. Natl. Acad. Sci. U.S.A.">
        <title>Complete genome sequence of Lactobacillus plantarum WCFS1.</title>
        <authorList>
            <person name="Kleerebezem M."/>
            <person name="Boekhorst J."/>
            <person name="van Kranenburg R."/>
            <person name="Molenaar D."/>
            <person name="Kuipers O.P."/>
            <person name="Leer R."/>
            <person name="Tarchini R."/>
            <person name="Peters S.A."/>
            <person name="Sandbrink H.M."/>
            <person name="Fiers M.W.E.J."/>
            <person name="Stiekema W."/>
            <person name="Klein Lankhorst R.M."/>
            <person name="Bron P.A."/>
            <person name="Hoffer S.M."/>
            <person name="Nierop Groot M.N."/>
            <person name="Kerkhoven R."/>
            <person name="De Vries M."/>
            <person name="Ursing B."/>
            <person name="De Vos W.M."/>
            <person name="Siezen R.J."/>
        </authorList>
    </citation>
    <scope>NUCLEOTIDE SEQUENCE [LARGE SCALE GENOMIC DNA]</scope>
    <source>
        <strain>ATCC BAA-793 / NCIMB 8826 / WCFS1</strain>
    </source>
</reference>
<reference key="2">
    <citation type="journal article" date="2012" name="J. Bacteriol.">
        <title>Complete resequencing and reannotation of the Lactobacillus plantarum WCFS1 genome.</title>
        <authorList>
            <person name="Siezen R.J."/>
            <person name="Francke C."/>
            <person name="Renckens B."/>
            <person name="Boekhorst J."/>
            <person name="Wels M."/>
            <person name="Kleerebezem M."/>
            <person name="van Hijum S.A."/>
        </authorList>
    </citation>
    <scope>NUCLEOTIDE SEQUENCE [LARGE SCALE GENOMIC DNA]</scope>
    <scope>GENOME REANNOTATION</scope>
    <source>
        <strain>ATCC BAA-793 / NCIMB 8826 / WCFS1</strain>
    </source>
</reference>
<evidence type="ECO:0000250" key="1"/>
<evidence type="ECO:0000250" key="2">
    <source>
        <dbReference type="UniProtKB" id="P52278"/>
    </source>
</evidence>
<evidence type="ECO:0000255" key="3"/>
<name>PIP_LACPL</name>
<sequence length="287" mass="32411">MPFNGYQTYYRIVGDRQSNKTPLVLLHGGPGSTHNYFEGFDDLAAQTGRPIVMYDQLGCGRSSIPDDDQLWQAAMWVAELRALRTYLDLPEIHLLGQSWGGMLAIIYGCDYRPQGIKSLILASTLSSARLWAQEQHRMIRLMSPVDQSAIATAERLQDFTGAAYLTANQHFMTQHASGPITADDPEFLRRSKRVGTTAYNVAWGPNEYNPTGTLADYEYTDRLQYLQMPTLVTSGTDDLCTPLVAKTMVDQLPHATWTLFPRSRHMAFIDENTAYMTRLRHWLAAHD</sequence>
<feature type="chain" id="PRO_0000406326" description="Proline iminopeptidase">
    <location>
        <begin position="1"/>
        <end position="287"/>
    </location>
</feature>
<feature type="domain" description="AB hydrolase-1" evidence="3">
    <location>
        <begin position="22"/>
        <end position="271"/>
    </location>
</feature>
<feature type="active site" description="Nucleophile" evidence="1">
    <location>
        <position position="98"/>
    </location>
</feature>
<feature type="active site" evidence="1">
    <location>
        <position position="238"/>
    </location>
</feature>
<feature type="active site" description="Proton donor" evidence="1">
    <location>
        <position position="265"/>
    </location>
</feature>